<organism>
    <name type="scientific">Staphylococcus aureus (strain USA300 / TCH1516)</name>
    <dbReference type="NCBI Taxonomy" id="451516"/>
    <lineage>
        <taxon>Bacteria</taxon>
        <taxon>Bacillati</taxon>
        <taxon>Bacillota</taxon>
        <taxon>Bacilli</taxon>
        <taxon>Bacillales</taxon>
        <taxon>Staphylococcaceae</taxon>
        <taxon>Staphylococcus</taxon>
    </lineage>
</organism>
<accession>P0C7U6</accession>
<keyword id="KW-0963">Cytoplasm</keyword>
<keyword id="KW-0520">NAD</keyword>
<keyword id="KW-0560">Oxidoreductase</keyword>
<keyword id="KW-0597">Phosphoprotein</keyword>
<keyword id="KW-0346">Stress response</keyword>
<evidence type="ECO:0000250" key="1">
    <source>
        <dbReference type="UniProtKB" id="Q5HCV0"/>
    </source>
</evidence>
<evidence type="ECO:0000255" key="2">
    <source>
        <dbReference type="HAMAP-Rule" id="MF_00488"/>
    </source>
</evidence>
<evidence type="ECO:0000305" key="3"/>
<sequence>MKTFGKKVVLIGDGSVGSSYAFAMVTQGVADEFVIIDIAKDKVKADVQDLNHGTVHSPSPVDVKAGEYEDCKDADLVVITAGAPQKPGETRLQLVEKNTKIMKSIVKSVMDSGFDGYFLIAANPVDILTRFVKEYTGLPAERVIGSGTVLDSARLQYLISQELGVAPSSVDASIIGEHGDTELAVWSQANVAGISVYDTLKEQTGSEAKAEEIYVNTRDAAYEIIQAKGSTYYGIALALMRISKAILNNENNVLNVSIQLDGQYGGHKGVYLGVPTLVNQHGAVKIYEMPLSAEEQALFDKSVKTLEDTFDSIKYLLED</sequence>
<gene>
    <name evidence="2" type="primary">ldh2</name>
    <name type="ordered locus">USA300HOU_2594.1</name>
</gene>
<dbReference type="EC" id="1.1.1.27" evidence="2"/>
<dbReference type="EMBL" id="CP000730">
    <property type="status" value="NOT_ANNOTATED_CDS"/>
    <property type="molecule type" value="Genomic_DNA"/>
</dbReference>
<dbReference type="RefSeq" id="WP_000846637.1">
    <property type="nucleotide sequence ID" value="NC_010079.1"/>
</dbReference>
<dbReference type="SMR" id="P0C7U6"/>
<dbReference type="UniPathway" id="UPA00554">
    <property type="reaction ID" value="UER00611"/>
</dbReference>
<dbReference type="GO" id="GO:0005737">
    <property type="term" value="C:cytoplasm"/>
    <property type="evidence" value="ECO:0007669"/>
    <property type="project" value="UniProtKB-SubCell"/>
</dbReference>
<dbReference type="GO" id="GO:0004459">
    <property type="term" value="F:L-lactate dehydrogenase activity"/>
    <property type="evidence" value="ECO:0007669"/>
    <property type="project" value="UniProtKB-UniRule"/>
</dbReference>
<dbReference type="GO" id="GO:0006096">
    <property type="term" value="P:glycolytic process"/>
    <property type="evidence" value="ECO:0007669"/>
    <property type="project" value="UniProtKB-UniRule"/>
</dbReference>
<dbReference type="GO" id="GO:0006089">
    <property type="term" value="P:lactate metabolic process"/>
    <property type="evidence" value="ECO:0007669"/>
    <property type="project" value="TreeGrafter"/>
</dbReference>
<dbReference type="CDD" id="cd05291">
    <property type="entry name" value="HicDH_like"/>
    <property type="match status" value="1"/>
</dbReference>
<dbReference type="FunFam" id="3.40.50.720:FF:000018">
    <property type="entry name" value="Malate dehydrogenase"/>
    <property type="match status" value="1"/>
</dbReference>
<dbReference type="Gene3D" id="3.90.110.10">
    <property type="entry name" value="Lactate dehydrogenase/glycoside hydrolase, family 4, C-terminal"/>
    <property type="match status" value="1"/>
</dbReference>
<dbReference type="Gene3D" id="3.40.50.720">
    <property type="entry name" value="NAD(P)-binding Rossmann-like Domain"/>
    <property type="match status" value="1"/>
</dbReference>
<dbReference type="HAMAP" id="MF_00488">
    <property type="entry name" value="Lactate_dehydrog"/>
    <property type="match status" value="1"/>
</dbReference>
<dbReference type="InterPro" id="IPR001557">
    <property type="entry name" value="L-lactate/malate_DH"/>
</dbReference>
<dbReference type="InterPro" id="IPR011304">
    <property type="entry name" value="L-lactate_DH"/>
</dbReference>
<dbReference type="InterPro" id="IPR018177">
    <property type="entry name" value="L-lactate_DH_AS"/>
</dbReference>
<dbReference type="InterPro" id="IPR022383">
    <property type="entry name" value="Lactate/malate_DH_C"/>
</dbReference>
<dbReference type="InterPro" id="IPR001236">
    <property type="entry name" value="Lactate/malate_DH_N"/>
</dbReference>
<dbReference type="InterPro" id="IPR015955">
    <property type="entry name" value="Lactate_DH/Glyco_Ohase_4_C"/>
</dbReference>
<dbReference type="InterPro" id="IPR036291">
    <property type="entry name" value="NAD(P)-bd_dom_sf"/>
</dbReference>
<dbReference type="NCBIfam" id="TIGR01771">
    <property type="entry name" value="L-LDH-NAD"/>
    <property type="match status" value="1"/>
</dbReference>
<dbReference type="NCBIfam" id="NF000824">
    <property type="entry name" value="PRK00066.1"/>
    <property type="match status" value="1"/>
</dbReference>
<dbReference type="PANTHER" id="PTHR43128">
    <property type="entry name" value="L-2-HYDROXYCARBOXYLATE DEHYDROGENASE (NAD(P)(+))"/>
    <property type="match status" value="1"/>
</dbReference>
<dbReference type="PANTHER" id="PTHR43128:SF16">
    <property type="entry name" value="L-LACTATE DEHYDROGENASE"/>
    <property type="match status" value="1"/>
</dbReference>
<dbReference type="Pfam" id="PF02866">
    <property type="entry name" value="Ldh_1_C"/>
    <property type="match status" value="1"/>
</dbReference>
<dbReference type="Pfam" id="PF00056">
    <property type="entry name" value="Ldh_1_N"/>
    <property type="match status" value="1"/>
</dbReference>
<dbReference type="PIRSF" id="PIRSF000102">
    <property type="entry name" value="Lac_mal_DH"/>
    <property type="match status" value="1"/>
</dbReference>
<dbReference type="PRINTS" id="PR00086">
    <property type="entry name" value="LLDHDRGNASE"/>
</dbReference>
<dbReference type="SUPFAM" id="SSF56327">
    <property type="entry name" value="LDH C-terminal domain-like"/>
    <property type="match status" value="1"/>
</dbReference>
<dbReference type="SUPFAM" id="SSF51735">
    <property type="entry name" value="NAD(P)-binding Rossmann-fold domains"/>
    <property type="match status" value="1"/>
</dbReference>
<dbReference type="PROSITE" id="PS00064">
    <property type="entry name" value="L_LDH"/>
    <property type="match status" value="1"/>
</dbReference>
<protein>
    <recommendedName>
        <fullName evidence="2">L-lactate dehydrogenase 2</fullName>
        <shortName evidence="2">L-LDH 2</shortName>
        <ecNumber evidence="2">1.1.1.27</ecNumber>
    </recommendedName>
</protein>
<feature type="chain" id="PRO_0000343844" description="L-lactate dehydrogenase 2">
    <location>
        <begin position="1"/>
        <end position="319"/>
    </location>
</feature>
<feature type="active site" description="Proton acceptor" evidence="2">
    <location>
        <position position="178"/>
    </location>
</feature>
<feature type="binding site" evidence="2">
    <location>
        <position position="16"/>
    </location>
    <ligand>
        <name>NAD(+)</name>
        <dbReference type="ChEBI" id="CHEBI:57540"/>
    </ligand>
</feature>
<feature type="binding site" evidence="2">
    <location>
        <position position="37"/>
    </location>
    <ligand>
        <name>NAD(+)</name>
        <dbReference type="ChEBI" id="CHEBI:57540"/>
    </ligand>
</feature>
<feature type="binding site" evidence="2">
    <location>
        <position position="42"/>
    </location>
    <ligand>
        <name>NAD(+)</name>
        <dbReference type="ChEBI" id="CHEBI:57540"/>
    </ligand>
</feature>
<feature type="binding site" evidence="2">
    <location>
        <position position="68"/>
    </location>
    <ligand>
        <name>NAD(+)</name>
        <dbReference type="ChEBI" id="CHEBI:57540"/>
    </ligand>
</feature>
<feature type="binding site" evidence="2">
    <location>
        <begin position="82"/>
        <end position="83"/>
    </location>
    <ligand>
        <name>NAD(+)</name>
        <dbReference type="ChEBI" id="CHEBI:57540"/>
    </ligand>
</feature>
<feature type="binding site" evidence="2">
    <location>
        <position position="85"/>
    </location>
    <ligand>
        <name>substrate</name>
    </ligand>
</feature>
<feature type="binding site" evidence="2">
    <location>
        <position position="91"/>
    </location>
    <ligand>
        <name>substrate</name>
    </ligand>
</feature>
<feature type="binding site" evidence="2">
    <location>
        <position position="104"/>
    </location>
    <ligand>
        <name>NAD(+)</name>
        <dbReference type="ChEBI" id="CHEBI:57540"/>
    </ligand>
</feature>
<feature type="binding site" evidence="2">
    <location>
        <begin position="121"/>
        <end position="123"/>
    </location>
    <ligand>
        <name>NAD(+)</name>
        <dbReference type="ChEBI" id="CHEBI:57540"/>
    </ligand>
</feature>
<feature type="binding site" evidence="2">
    <location>
        <begin position="123"/>
        <end position="126"/>
    </location>
    <ligand>
        <name>substrate</name>
    </ligand>
</feature>
<feature type="binding site" evidence="2">
    <location>
        <position position="146"/>
    </location>
    <ligand>
        <name>NAD(+)</name>
        <dbReference type="ChEBI" id="CHEBI:57540"/>
    </ligand>
</feature>
<feature type="binding site" evidence="2">
    <location>
        <begin position="151"/>
        <end position="154"/>
    </location>
    <ligand>
        <name>substrate</name>
    </ligand>
</feature>
<feature type="binding site" evidence="2">
    <location>
        <position position="231"/>
    </location>
    <ligand>
        <name>substrate</name>
    </ligand>
</feature>
<feature type="modified residue" description="Phosphotyrosine" evidence="2">
    <location>
        <position position="222"/>
    </location>
</feature>
<comment type="function">
    <text evidence="1 2">Catalyzes the conversion of lactate to pyruvate (Potential). Contributes to S.aureus growth during nitrosative stress in both aerobically and anaerobically cultured cells, despite playing a secondary role in this resistance mechanism (By similarity).</text>
</comment>
<comment type="catalytic activity">
    <reaction evidence="2">
        <text>(S)-lactate + NAD(+) = pyruvate + NADH + H(+)</text>
        <dbReference type="Rhea" id="RHEA:23444"/>
        <dbReference type="ChEBI" id="CHEBI:15361"/>
        <dbReference type="ChEBI" id="CHEBI:15378"/>
        <dbReference type="ChEBI" id="CHEBI:16651"/>
        <dbReference type="ChEBI" id="CHEBI:57540"/>
        <dbReference type="ChEBI" id="CHEBI:57945"/>
        <dbReference type="EC" id="1.1.1.27"/>
    </reaction>
</comment>
<comment type="pathway">
    <text evidence="2">Fermentation; pyruvate fermentation to lactate; (S)-lactate from pyruvate: step 1/1.</text>
</comment>
<comment type="subunit">
    <text evidence="2">Homotetramer.</text>
</comment>
<comment type="subcellular location">
    <subcellularLocation>
        <location evidence="2">Cytoplasm</location>
    </subcellularLocation>
</comment>
<comment type="similarity">
    <text evidence="2 3">Belongs to the LDH/MDH superfamily. LDH family.</text>
</comment>
<proteinExistence type="inferred from homology"/>
<name>LDH2_STAAT</name>
<reference key="1">
    <citation type="journal article" date="2007" name="BMC Microbiol.">
        <title>Subtle genetic changes enhance virulence of methicillin resistant and sensitive Staphylococcus aureus.</title>
        <authorList>
            <person name="Highlander S.K."/>
            <person name="Hulten K.G."/>
            <person name="Qin X."/>
            <person name="Jiang H."/>
            <person name="Yerrapragada S."/>
            <person name="Mason E.O. Jr."/>
            <person name="Shang Y."/>
            <person name="Williams T.M."/>
            <person name="Fortunov R.M."/>
            <person name="Liu Y."/>
            <person name="Igboeli O."/>
            <person name="Petrosino J."/>
            <person name="Tirumalai M."/>
            <person name="Uzman A."/>
            <person name="Fox G.E."/>
            <person name="Cardenas A.M."/>
            <person name="Muzny D.M."/>
            <person name="Hemphill L."/>
            <person name="Ding Y."/>
            <person name="Dugan S."/>
            <person name="Blyth P.R."/>
            <person name="Buhay C.J."/>
            <person name="Dinh H.H."/>
            <person name="Hawes A.C."/>
            <person name="Holder M."/>
            <person name="Kovar C.L."/>
            <person name="Lee S.L."/>
            <person name="Liu W."/>
            <person name="Nazareth L.V."/>
            <person name="Wang Q."/>
            <person name="Zhou J."/>
            <person name="Kaplan S.L."/>
            <person name="Weinstock G.M."/>
        </authorList>
    </citation>
    <scope>NUCLEOTIDE SEQUENCE [LARGE SCALE GENOMIC DNA]</scope>
    <source>
        <strain>USA300 / TCH1516</strain>
    </source>
</reference>